<reference key="1">
    <citation type="submission" date="2008-06" db="EMBL/GenBank/DDBJ databases">
        <title>Complete sequence of Stenotrophomonas maltophilia R551-3.</title>
        <authorList>
            <consortium name="US DOE Joint Genome Institute"/>
            <person name="Lucas S."/>
            <person name="Copeland A."/>
            <person name="Lapidus A."/>
            <person name="Glavina del Rio T."/>
            <person name="Dalin E."/>
            <person name="Tice H."/>
            <person name="Pitluck S."/>
            <person name="Chain P."/>
            <person name="Malfatti S."/>
            <person name="Shin M."/>
            <person name="Vergez L."/>
            <person name="Lang D."/>
            <person name="Schmutz J."/>
            <person name="Larimer F."/>
            <person name="Land M."/>
            <person name="Hauser L."/>
            <person name="Kyrpides N."/>
            <person name="Mikhailova N."/>
            <person name="Taghavi S."/>
            <person name="Monchy S."/>
            <person name="Newman L."/>
            <person name="Vangronsveld J."/>
            <person name="van der Lelie D."/>
            <person name="Richardson P."/>
        </authorList>
    </citation>
    <scope>NUCLEOTIDE SEQUENCE [LARGE SCALE GENOMIC DNA]</scope>
    <source>
        <strain>R551-3</strain>
    </source>
</reference>
<sequence length="254" mass="27685">MRLTALTAFADNYIWMLIDDDGAAVVVDPGDAAPVLALADQGLRVDSILLTHHHDDHIGGVPALQARFPGVRVIAPVEERIPTATERVGEGERVQALGRMFHVLSVPGHTRSHIAFHTAEHLFSGDSLFSLGCGRLFEGTPSQLLASMLKLGALPAQLLLCCAHEYTVSNAVFARHVDPANAALWQRQEEALAMRRDDRSTLPVTLANEFDCNPFLRVHTAPIRASVSAHLGRDVVDDVDVMAGLRHWKDGFRA</sequence>
<comment type="function">
    <text evidence="1">Thiolesterase that catalyzes the hydrolysis of S-D-lactoyl-glutathione to form glutathione and D-lactic acid.</text>
</comment>
<comment type="catalytic activity">
    <reaction evidence="1">
        <text>an S-(2-hydroxyacyl)glutathione + H2O = a 2-hydroxy carboxylate + glutathione + H(+)</text>
        <dbReference type="Rhea" id="RHEA:21864"/>
        <dbReference type="ChEBI" id="CHEBI:15377"/>
        <dbReference type="ChEBI" id="CHEBI:15378"/>
        <dbReference type="ChEBI" id="CHEBI:57925"/>
        <dbReference type="ChEBI" id="CHEBI:58896"/>
        <dbReference type="ChEBI" id="CHEBI:71261"/>
        <dbReference type="EC" id="3.1.2.6"/>
    </reaction>
</comment>
<comment type="cofactor">
    <cofactor evidence="1">
        <name>Zn(2+)</name>
        <dbReference type="ChEBI" id="CHEBI:29105"/>
    </cofactor>
    <text evidence="1">Binds 2 Zn(2+) ions per subunit.</text>
</comment>
<comment type="pathway">
    <text evidence="1">Secondary metabolite metabolism; methylglyoxal degradation; (R)-lactate from methylglyoxal: step 2/2.</text>
</comment>
<comment type="subunit">
    <text evidence="1">Monomer.</text>
</comment>
<comment type="similarity">
    <text evidence="1">Belongs to the metallo-beta-lactamase superfamily. Glyoxalase II family.</text>
</comment>
<name>GLO2_STRM5</name>
<gene>
    <name evidence="1" type="primary">gloB</name>
    <name type="ordered locus">Smal_0842</name>
</gene>
<evidence type="ECO:0000255" key="1">
    <source>
        <dbReference type="HAMAP-Rule" id="MF_01374"/>
    </source>
</evidence>
<protein>
    <recommendedName>
        <fullName evidence="1">Hydroxyacylglutathione hydrolase</fullName>
        <ecNumber evidence="1">3.1.2.6</ecNumber>
    </recommendedName>
    <alternativeName>
        <fullName evidence="1">Glyoxalase II</fullName>
        <shortName evidence="1">Glx II</shortName>
    </alternativeName>
</protein>
<feature type="chain" id="PRO_1000144815" description="Hydroxyacylglutathione hydrolase">
    <location>
        <begin position="1"/>
        <end position="254"/>
    </location>
</feature>
<feature type="binding site" evidence="1">
    <location>
        <position position="52"/>
    </location>
    <ligand>
        <name>Zn(2+)</name>
        <dbReference type="ChEBI" id="CHEBI:29105"/>
        <label>1</label>
    </ligand>
</feature>
<feature type="binding site" evidence="1">
    <location>
        <position position="54"/>
    </location>
    <ligand>
        <name>Zn(2+)</name>
        <dbReference type="ChEBI" id="CHEBI:29105"/>
        <label>1</label>
    </ligand>
</feature>
<feature type="binding site" evidence="1">
    <location>
        <position position="56"/>
    </location>
    <ligand>
        <name>Zn(2+)</name>
        <dbReference type="ChEBI" id="CHEBI:29105"/>
        <label>2</label>
    </ligand>
</feature>
<feature type="binding site" evidence="1">
    <location>
        <position position="57"/>
    </location>
    <ligand>
        <name>Zn(2+)</name>
        <dbReference type="ChEBI" id="CHEBI:29105"/>
        <label>2</label>
    </ligand>
</feature>
<feature type="binding site" evidence="1">
    <location>
        <position position="109"/>
    </location>
    <ligand>
        <name>Zn(2+)</name>
        <dbReference type="ChEBI" id="CHEBI:29105"/>
        <label>1</label>
    </ligand>
</feature>
<feature type="binding site" evidence="1">
    <location>
        <position position="126"/>
    </location>
    <ligand>
        <name>Zn(2+)</name>
        <dbReference type="ChEBI" id="CHEBI:29105"/>
        <label>1</label>
    </ligand>
</feature>
<feature type="binding site" evidence="1">
    <location>
        <position position="126"/>
    </location>
    <ligand>
        <name>Zn(2+)</name>
        <dbReference type="ChEBI" id="CHEBI:29105"/>
        <label>2</label>
    </ligand>
</feature>
<feature type="binding site" evidence="1">
    <location>
        <position position="164"/>
    </location>
    <ligand>
        <name>Zn(2+)</name>
        <dbReference type="ChEBI" id="CHEBI:29105"/>
        <label>2</label>
    </ligand>
</feature>
<keyword id="KW-0378">Hydrolase</keyword>
<keyword id="KW-0479">Metal-binding</keyword>
<keyword id="KW-0862">Zinc</keyword>
<accession>B4SLN7</accession>
<proteinExistence type="inferred from homology"/>
<organism>
    <name type="scientific">Stenotrophomonas maltophilia (strain R551-3)</name>
    <dbReference type="NCBI Taxonomy" id="391008"/>
    <lineage>
        <taxon>Bacteria</taxon>
        <taxon>Pseudomonadati</taxon>
        <taxon>Pseudomonadota</taxon>
        <taxon>Gammaproteobacteria</taxon>
        <taxon>Lysobacterales</taxon>
        <taxon>Lysobacteraceae</taxon>
        <taxon>Stenotrophomonas</taxon>
        <taxon>Stenotrophomonas maltophilia group</taxon>
    </lineage>
</organism>
<dbReference type="EC" id="3.1.2.6" evidence="1"/>
<dbReference type="EMBL" id="CP001111">
    <property type="protein sequence ID" value="ACF50547.1"/>
    <property type="molecule type" value="Genomic_DNA"/>
</dbReference>
<dbReference type="RefSeq" id="WP_012510197.1">
    <property type="nucleotide sequence ID" value="NC_011071.1"/>
</dbReference>
<dbReference type="SMR" id="B4SLN7"/>
<dbReference type="STRING" id="391008.Smal_0842"/>
<dbReference type="KEGG" id="smt:Smal_0842"/>
<dbReference type="eggNOG" id="COG0491">
    <property type="taxonomic scope" value="Bacteria"/>
</dbReference>
<dbReference type="HOGENOM" id="CLU_030571_4_1_6"/>
<dbReference type="OrthoDB" id="9802248at2"/>
<dbReference type="UniPathway" id="UPA00619">
    <property type="reaction ID" value="UER00676"/>
</dbReference>
<dbReference type="Proteomes" id="UP000001867">
    <property type="component" value="Chromosome"/>
</dbReference>
<dbReference type="GO" id="GO:0004416">
    <property type="term" value="F:hydroxyacylglutathione hydrolase activity"/>
    <property type="evidence" value="ECO:0007669"/>
    <property type="project" value="UniProtKB-UniRule"/>
</dbReference>
<dbReference type="GO" id="GO:0046872">
    <property type="term" value="F:metal ion binding"/>
    <property type="evidence" value="ECO:0007669"/>
    <property type="project" value="UniProtKB-KW"/>
</dbReference>
<dbReference type="GO" id="GO:0019243">
    <property type="term" value="P:methylglyoxal catabolic process to D-lactate via S-lactoyl-glutathione"/>
    <property type="evidence" value="ECO:0007669"/>
    <property type="project" value="InterPro"/>
</dbReference>
<dbReference type="CDD" id="cd07723">
    <property type="entry name" value="hydroxyacylglutathione_hydrolase_MBL-fold"/>
    <property type="match status" value="1"/>
</dbReference>
<dbReference type="Gene3D" id="3.60.15.10">
    <property type="entry name" value="Ribonuclease Z/Hydroxyacylglutathione hydrolase-like"/>
    <property type="match status" value="1"/>
</dbReference>
<dbReference type="HAMAP" id="MF_01374">
    <property type="entry name" value="Glyoxalase_2"/>
    <property type="match status" value="1"/>
</dbReference>
<dbReference type="InterPro" id="IPR035680">
    <property type="entry name" value="Clx_II_MBL"/>
</dbReference>
<dbReference type="InterPro" id="IPR050110">
    <property type="entry name" value="Glyoxalase_II_hydrolase"/>
</dbReference>
<dbReference type="InterPro" id="IPR032282">
    <property type="entry name" value="HAGH_C"/>
</dbReference>
<dbReference type="InterPro" id="IPR017782">
    <property type="entry name" value="Hydroxyacylglutathione_Hdrlase"/>
</dbReference>
<dbReference type="InterPro" id="IPR001279">
    <property type="entry name" value="Metallo-B-lactamas"/>
</dbReference>
<dbReference type="InterPro" id="IPR036866">
    <property type="entry name" value="RibonucZ/Hydroxyglut_hydro"/>
</dbReference>
<dbReference type="NCBIfam" id="TIGR03413">
    <property type="entry name" value="GSH_gloB"/>
    <property type="match status" value="1"/>
</dbReference>
<dbReference type="PANTHER" id="PTHR43705">
    <property type="entry name" value="HYDROXYACYLGLUTATHIONE HYDROLASE"/>
    <property type="match status" value="1"/>
</dbReference>
<dbReference type="PANTHER" id="PTHR43705:SF1">
    <property type="entry name" value="HYDROXYACYLGLUTATHIONE HYDROLASE GLOB"/>
    <property type="match status" value="1"/>
</dbReference>
<dbReference type="Pfam" id="PF16123">
    <property type="entry name" value="HAGH_C"/>
    <property type="match status" value="1"/>
</dbReference>
<dbReference type="Pfam" id="PF00753">
    <property type="entry name" value="Lactamase_B"/>
    <property type="match status" value="1"/>
</dbReference>
<dbReference type="PIRSF" id="PIRSF005457">
    <property type="entry name" value="Glx"/>
    <property type="match status" value="1"/>
</dbReference>
<dbReference type="SMART" id="SM00849">
    <property type="entry name" value="Lactamase_B"/>
    <property type="match status" value="1"/>
</dbReference>
<dbReference type="SUPFAM" id="SSF56281">
    <property type="entry name" value="Metallo-hydrolase/oxidoreductase"/>
    <property type="match status" value="1"/>
</dbReference>